<evidence type="ECO:0000255" key="1"/>
<evidence type="ECO:0000256" key="2">
    <source>
        <dbReference type="SAM" id="MobiDB-lite"/>
    </source>
</evidence>
<evidence type="ECO:0000305" key="3"/>
<reference key="1">
    <citation type="journal article" date="2000" name="Nature">
        <title>Sequence and analysis of chromosome 1 of the plant Arabidopsis thaliana.</title>
        <authorList>
            <person name="Theologis A."/>
            <person name="Ecker J.R."/>
            <person name="Palm C.J."/>
            <person name="Federspiel N.A."/>
            <person name="Kaul S."/>
            <person name="White O."/>
            <person name="Alonso J."/>
            <person name="Altafi H."/>
            <person name="Araujo R."/>
            <person name="Bowman C.L."/>
            <person name="Brooks S.Y."/>
            <person name="Buehler E."/>
            <person name="Chan A."/>
            <person name="Chao Q."/>
            <person name="Chen H."/>
            <person name="Cheuk R.F."/>
            <person name="Chin C.W."/>
            <person name="Chung M.K."/>
            <person name="Conn L."/>
            <person name="Conway A.B."/>
            <person name="Conway A.R."/>
            <person name="Creasy T.H."/>
            <person name="Dewar K."/>
            <person name="Dunn P."/>
            <person name="Etgu P."/>
            <person name="Feldblyum T.V."/>
            <person name="Feng J.-D."/>
            <person name="Fong B."/>
            <person name="Fujii C.Y."/>
            <person name="Gill J.E."/>
            <person name="Goldsmith A.D."/>
            <person name="Haas B."/>
            <person name="Hansen N.F."/>
            <person name="Hughes B."/>
            <person name="Huizar L."/>
            <person name="Hunter J.L."/>
            <person name="Jenkins J."/>
            <person name="Johnson-Hopson C."/>
            <person name="Khan S."/>
            <person name="Khaykin E."/>
            <person name="Kim C.J."/>
            <person name="Koo H.L."/>
            <person name="Kremenetskaia I."/>
            <person name="Kurtz D.B."/>
            <person name="Kwan A."/>
            <person name="Lam B."/>
            <person name="Langin-Hooper S."/>
            <person name="Lee A."/>
            <person name="Lee J.M."/>
            <person name="Lenz C.A."/>
            <person name="Li J.H."/>
            <person name="Li Y.-P."/>
            <person name="Lin X."/>
            <person name="Liu S.X."/>
            <person name="Liu Z.A."/>
            <person name="Luros J.S."/>
            <person name="Maiti R."/>
            <person name="Marziali A."/>
            <person name="Militscher J."/>
            <person name="Miranda M."/>
            <person name="Nguyen M."/>
            <person name="Nierman W.C."/>
            <person name="Osborne B.I."/>
            <person name="Pai G."/>
            <person name="Peterson J."/>
            <person name="Pham P.K."/>
            <person name="Rizzo M."/>
            <person name="Rooney T."/>
            <person name="Rowley D."/>
            <person name="Sakano H."/>
            <person name="Salzberg S.L."/>
            <person name="Schwartz J.R."/>
            <person name="Shinn P."/>
            <person name="Southwick A.M."/>
            <person name="Sun H."/>
            <person name="Tallon L.J."/>
            <person name="Tambunga G."/>
            <person name="Toriumi M.J."/>
            <person name="Town C.D."/>
            <person name="Utterback T."/>
            <person name="Van Aken S."/>
            <person name="Vaysberg M."/>
            <person name="Vysotskaia V.S."/>
            <person name="Walker M."/>
            <person name="Wu D."/>
            <person name="Yu G."/>
            <person name="Fraser C.M."/>
            <person name="Venter J.C."/>
            <person name="Davis R.W."/>
        </authorList>
    </citation>
    <scope>NUCLEOTIDE SEQUENCE [LARGE SCALE GENOMIC DNA]</scope>
    <source>
        <strain>cv. Columbia</strain>
    </source>
</reference>
<reference key="2">
    <citation type="journal article" date="2017" name="Plant J.">
        <title>Araport11: a complete reannotation of the Arabidopsis thaliana reference genome.</title>
        <authorList>
            <person name="Cheng C.Y."/>
            <person name="Krishnakumar V."/>
            <person name="Chan A.P."/>
            <person name="Thibaud-Nissen F."/>
            <person name="Schobel S."/>
            <person name="Town C.D."/>
        </authorList>
    </citation>
    <scope>GENOME REANNOTATION</scope>
    <source>
        <strain>cv. Columbia</strain>
    </source>
</reference>
<reference key="3">
    <citation type="journal article" date="2003" name="Science">
        <title>Empirical analysis of transcriptional activity in the Arabidopsis genome.</title>
        <authorList>
            <person name="Yamada K."/>
            <person name="Lim J."/>
            <person name="Dale J.M."/>
            <person name="Chen H."/>
            <person name="Shinn P."/>
            <person name="Palm C.J."/>
            <person name="Southwick A.M."/>
            <person name="Wu H.C."/>
            <person name="Kim C.J."/>
            <person name="Nguyen M."/>
            <person name="Pham P.K."/>
            <person name="Cheuk R.F."/>
            <person name="Karlin-Newmann G."/>
            <person name="Liu S.X."/>
            <person name="Lam B."/>
            <person name="Sakano H."/>
            <person name="Wu T."/>
            <person name="Yu G."/>
            <person name="Miranda M."/>
            <person name="Quach H.L."/>
            <person name="Tripp M."/>
            <person name="Chang C.H."/>
            <person name="Lee J.M."/>
            <person name="Toriumi M.J."/>
            <person name="Chan M.M."/>
            <person name="Tang C.C."/>
            <person name="Onodera C.S."/>
            <person name="Deng J.M."/>
            <person name="Akiyama K."/>
            <person name="Ansari Y."/>
            <person name="Arakawa T."/>
            <person name="Banh J."/>
            <person name="Banno F."/>
            <person name="Bowser L."/>
            <person name="Brooks S.Y."/>
            <person name="Carninci P."/>
            <person name="Chao Q."/>
            <person name="Choy N."/>
            <person name="Enju A."/>
            <person name="Goldsmith A.D."/>
            <person name="Gurjal M."/>
            <person name="Hansen N.F."/>
            <person name="Hayashizaki Y."/>
            <person name="Johnson-Hopson C."/>
            <person name="Hsuan V.W."/>
            <person name="Iida K."/>
            <person name="Karnes M."/>
            <person name="Khan S."/>
            <person name="Koesema E."/>
            <person name="Ishida J."/>
            <person name="Jiang P.X."/>
            <person name="Jones T."/>
            <person name="Kawai J."/>
            <person name="Kamiya A."/>
            <person name="Meyers C."/>
            <person name="Nakajima M."/>
            <person name="Narusaka M."/>
            <person name="Seki M."/>
            <person name="Sakurai T."/>
            <person name="Satou M."/>
            <person name="Tamse R."/>
            <person name="Vaysberg M."/>
            <person name="Wallender E.K."/>
            <person name="Wong C."/>
            <person name="Yamamura Y."/>
            <person name="Yuan S."/>
            <person name="Shinozaki K."/>
            <person name="Davis R.W."/>
            <person name="Theologis A."/>
            <person name="Ecker J.R."/>
        </authorList>
    </citation>
    <scope>NUCLEOTIDE SEQUENCE [LARGE SCALE MRNA]</scope>
    <source>
        <strain>cv. Columbia</strain>
    </source>
</reference>
<reference key="4">
    <citation type="submission" date="2005-03" db="EMBL/GenBank/DDBJ databases">
        <title>Large-scale analysis of RIKEN Arabidopsis full-length (RAFL) cDNAs.</title>
        <authorList>
            <person name="Totoki Y."/>
            <person name="Seki M."/>
            <person name="Ishida J."/>
            <person name="Nakajima M."/>
            <person name="Enju A."/>
            <person name="Kamiya A."/>
            <person name="Narusaka M."/>
            <person name="Shin-i T."/>
            <person name="Nakagawa M."/>
            <person name="Sakamoto N."/>
            <person name="Oishi K."/>
            <person name="Kohara Y."/>
            <person name="Kobayashi M."/>
            <person name="Toyoda A."/>
            <person name="Sakaki Y."/>
            <person name="Sakurai T."/>
            <person name="Iida K."/>
            <person name="Akiyama K."/>
            <person name="Satou M."/>
            <person name="Toyoda T."/>
            <person name="Konagaya A."/>
            <person name="Carninci P."/>
            <person name="Kawai J."/>
            <person name="Hayashizaki Y."/>
            <person name="Shinozaki K."/>
        </authorList>
    </citation>
    <scope>NUCLEOTIDE SEQUENCE [LARGE SCALE MRNA] OF 381-596</scope>
    <source>
        <strain>cv. Columbia</strain>
    </source>
</reference>
<reference key="5">
    <citation type="journal article" date="2004" name="Plant Cell">
        <title>Genome-wide analysis of Arabidopsis pentatricopeptide repeat proteins reveals their essential role in organelle biogenesis.</title>
        <authorList>
            <person name="Lurin C."/>
            <person name="Andres C."/>
            <person name="Aubourg S."/>
            <person name="Bellaoui M."/>
            <person name="Bitton F."/>
            <person name="Bruyere C."/>
            <person name="Caboche M."/>
            <person name="Debast C."/>
            <person name="Gualberto J."/>
            <person name="Hoffmann B."/>
            <person name="Lecharny A."/>
            <person name="Le Ret M."/>
            <person name="Martin-Magniette M.-L."/>
            <person name="Mireau H."/>
            <person name="Peeters N."/>
            <person name="Renou J.-P."/>
            <person name="Szurek B."/>
            <person name="Taconnat L."/>
            <person name="Small I."/>
        </authorList>
    </citation>
    <scope>GENE FAMILY</scope>
</reference>
<accession>Q9C977</accession>
<accession>Q56YX6</accession>
<sequence>MFALSKVLRRTQRLRLGACSAVFSKDIQLGGERSFDSNSIASTKREAVPRFYEISSLSNRALSSSAGTKSDQEEDDLEDGFSELEGSKSGQGSTSSDEDEGKLSADEEEEEELDLIETDVSRKTVEKKQSELFKTIVSAPGLSIGSALDKWVEEGNEITRVEIAKAMLQLRRRRMYGRALQMSEWLEANKKIEMTERDYASRLDLTVKIRGLEKGEACMQKIPKSFKGEVLYRTLLANCVAAGNVKKSELVFNKMKDLGFPLSGFTCDQMLLLHKRIDRKKIADVLLLMEKENIKPSLLTYKILIDVKGATNDISGMEQILETMKDEGVELDFQTQALTARHYSGAGLKDKAEKVLKEMEGESLEANRRAFKDLLSIYASLGREDEVKRIWKICESKPYFEESLAAIQAFGKLNKVQEAEAIFEKIVKMDRRASSSTYSVLLRVYVDHKMLSKGKDLVKRMAESGCRIEATTWDALIKLYVEAGEVEKADSLLDKASKQSHTKLMMNSFMYIMDEYSKRGDVHNTEKIFLKMREAGYTSRLRQFQALMQAYINAKSPAYGMRDRLKADNIFPNKSMAAQLAQGDPFKKTAISDILD</sequence>
<name>PP135_ARATH</name>
<protein>
    <recommendedName>
        <fullName>Pentatricopeptide repeat-containing protein At1g80270, mitochondrial</fullName>
    </recommendedName>
</protein>
<comment type="subcellular location">
    <subcellularLocation>
        <location evidence="3">Mitochondrion</location>
    </subcellularLocation>
</comment>
<comment type="similarity">
    <text evidence="3">Belongs to the PPR family. P subfamily.</text>
</comment>
<comment type="online information" name="Pentatricopeptide repeat proteins">
    <link uri="https://ppr.plantenergy.uwa.edu.au"/>
</comment>
<gene>
    <name type="ordered locus">At1g80270</name>
    <name type="ORF">F5I6.2</name>
</gene>
<feature type="transit peptide" description="Mitochondrion" evidence="1">
    <location>
        <begin position="1"/>
        <end position="69"/>
    </location>
</feature>
<feature type="chain" id="PRO_0000342876" description="Pentatricopeptide repeat-containing protein At1g80270, mitochondrial">
    <location>
        <begin position="70"/>
        <end position="596"/>
    </location>
</feature>
<feature type="repeat" description="PPR 1">
    <location>
        <begin position="228"/>
        <end position="262"/>
    </location>
</feature>
<feature type="repeat" description="PPR 2">
    <location>
        <begin position="263"/>
        <end position="296"/>
    </location>
</feature>
<feature type="repeat" description="PPR 3">
    <location>
        <begin position="297"/>
        <end position="331"/>
    </location>
</feature>
<feature type="repeat" description="PPR 4">
    <location>
        <begin position="332"/>
        <end position="366"/>
    </location>
</feature>
<feature type="repeat" description="PPR 5">
    <location>
        <begin position="367"/>
        <end position="397"/>
    </location>
</feature>
<feature type="repeat" description="PPR 6">
    <location>
        <begin position="399"/>
        <end position="433"/>
    </location>
</feature>
<feature type="repeat" description="PPR 7">
    <location>
        <begin position="434"/>
        <end position="468"/>
    </location>
</feature>
<feature type="repeat" description="PPR 8">
    <location>
        <begin position="469"/>
        <end position="503"/>
    </location>
</feature>
<feature type="repeat" description="PPR 9">
    <location>
        <begin position="505"/>
        <end position="539"/>
    </location>
</feature>
<feature type="region of interest" description="Disordered" evidence="2">
    <location>
        <begin position="62"/>
        <end position="119"/>
    </location>
</feature>
<feature type="compositionally biased region" description="Acidic residues" evidence="2">
    <location>
        <begin position="72"/>
        <end position="82"/>
    </location>
</feature>
<feature type="compositionally biased region" description="Acidic residues" evidence="2">
    <location>
        <begin position="96"/>
        <end position="117"/>
    </location>
</feature>
<feature type="sequence conflict" description="In Ref. 4; BAD95295." evidence="3" ref="4">
    <original>A</original>
    <variation>T</variation>
    <location>
        <position position="554"/>
    </location>
</feature>
<dbReference type="EMBL" id="AC018848">
    <property type="protein sequence ID" value="AAG52431.1"/>
    <property type="molecule type" value="Genomic_DNA"/>
</dbReference>
<dbReference type="EMBL" id="CP002684">
    <property type="protein sequence ID" value="AEE36379.1"/>
    <property type="molecule type" value="Genomic_DNA"/>
</dbReference>
<dbReference type="EMBL" id="CP002684">
    <property type="protein sequence ID" value="AEE36380.1"/>
    <property type="molecule type" value="Genomic_DNA"/>
</dbReference>
<dbReference type="EMBL" id="CP002684">
    <property type="protein sequence ID" value="AEE36381.1"/>
    <property type="molecule type" value="Genomic_DNA"/>
</dbReference>
<dbReference type="EMBL" id="CP002684">
    <property type="protein sequence ID" value="ANM59450.1"/>
    <property type="molecule type" value="Genomic_DNA"/>
</dbReference>
<dbReference type="EMBL" id="CP002684">
    <property type="protein sequence ID" value="ANM59451.1"/>
    <property type="molecule type" value="Genomic_DNA"/>
</dbReference>
<dbReference type="EMBL" id="AY062525">
    <property type="protein sequence ID" value="AAL32603.1"/>
    <property type="molecule type" value="mRNA"/>
</dbReference>
<dbReference type="EMBL" id="AY093307">
    <property type="protein sequence ID" value="AAM13306.1"/>
    <property type="molecule type" value="mRNA"/>
</dbReference>
<dbReference type="EMBL" id="AK221194">
    <property type="protein sequence ID" value="BAD95295.1"/>
    <property type="molecule type" value="mRNA"/>
</dbReference>
<dbReference type="PIR" id="B96834">
    <property type="entry name" value="B96834"/>
</dbReference>
<dbReference type="RefSeq" id="NP_001077853.1">
    <property type="nucleotide sequence ID" value="NM_001084384.3"/>
</dbReference>
<dbReference type="RefSeq" id="NP_001321806.1">
    <property type="nucleotide sequence ID" value="NM_001334977.1"/>
</dbReference>
<dbReference type="RefSeq" id="NP_001321807.1">
    <property type="nucleotide sequence ID" value="NM_001334976.1"/>
</dbReference>
<dbReference type="RefSeq" id="NP_178143.1">
    <property type="nucleotide sequence ID" value="NM_106676.2"/>
</dbReference>
<dbReference type="RefSeq" id="NP_974190.1">
    <property type="nucleotide sequence ID" value="NM_202461.3"/>
</dbReference>
<dbReference type="SMR" id="Q9C977"/>
<dbReference type="BioGRID" id="29585">
    <property type="interactions" value="3"/>
</dbReference>
<dbReference type="FunCoup" id="Q9C977">
    <property type="interactions" value="1043"/>
</dbReference>
<dbReference type="IntAct" id="Q9C977">
    <property type="interactions" value="2"/>
</dbReference>
<dbReference type="STRING" id="3702.Q9C977"/>
<dbReference type="iPTMnet" id="Q9C977"/>
<dbReference type="PaxDb" id="3702-AT1G80270.2"/>
<dbReference type="ProteomicsDB" id="249411"/>
<dbReference type="EnsemblPlants" id="AT1G80270.1">
    <property type="protein sequence ID" value="AT1G80270.1"/>
    <property type="gene ID" value="AT1G80270"/>
</dbReference>
<dbReference type="EnsemblPlants" id="AT1G80270.2">
    <property type="protein sequence ID" value="AT1G80270.2"/>
    <property type="gene ID" value="AT1G80270"/>
</dbReference>
<dbReference type="EnsemblPlants" id="AT1G80270.3">
    <property type="protein sequence ID" value="AT1G80270.3"/>
    <property type="gene ID" value="AT1G80270"/>
</dbReference>
<dbReference type="EnsemblPlants" id="AT1G80270.4">
    <property type="protein sequence ID" value="AT1G80270.4"/>
    <property type="gene ID" value="AT1G80270"/>
</dbReference>
<dbReference type="EnsemblPlants" id="AT1G80270.5">
    <property type="protein sequence ID" value="AT1G80270.5"/>
    <property type="gene ID" value="AT1G80270"/>
</dbReference>
<dbReference type="GeneID" id="844367"/>
<dbReference type="Gramene" id="AT1G80270.1">
    <property type="protein sequence ID" value="AT1G80270.1"/>
    <property type="gene ID" value="AT1G80270"/>
</dbReference>
<dbReference type="Gramene" id="AT1G80270.2">
    <property type="protein sequence ID" value="AT1G80270.2"/>
    <property type="gene ID" value="AT1G80270"/>
</dbReference>
<dbReference type="Gramene" id="AT1G80270.3">
    <property type="protein sequence ID" value="AT1G80270.3"/>
    <property type="gene ID" value="AT1G80270"/>
</dbReference>
<dbReference type="Gramene" id="AT1G80270.4">
    <property type="protein sequence ID" value="AT1G80270.4"/>
    <property type="gene ID" value="AT1G80270"/>
</dbReference>
<dbReference type="Gramene" id="AT1G80270.5">
    <property type="protein sequence ID" value="AT1G80270.5"/>
    <property type="gene ID" value="AT1G80270"/>
</dbReference>
<dbReference type="KEGG" id="ath:AT1G80270"/>
<dbReference type="Araport" id="AT1G80270"/>
<dbReference type="TAIR" id="AT1G80270">
    <property type="gene designation" value="PPR596"/>
</dbReference>
<dbReference type="eggNOG" id="KOG4197">
    <property type="taxonomic scope" value="Eukaryota"/>
</dbReference>
<dbReference type="HOGENOM" id="CLU_019802_1_0_1"/>
<dbReference type="InParanoid" id="Q9C977"/>
<dbReference type="OMA" id="MYTTYLM"/>
<dbReference type="PhylomeDB" id="Q9C977"/>
<dbReference type="CD-CODE" id="4299E36E">
    <property type="entry name" value="Nucleolus"/>
</dbReference>
<dbReference type="PRO" id="PR:Q9C977"/>
<dbReference type="Proteomes" id="UP000006548">
    <property type="component" value="Chromosome 1"/>
</dbReference>
<dbReference type="ExpressionAtlas" id="Q9C977">
    <property type="expression patterns" value="baseline and differential"/>
</dbReference>
<dbReference type="GO" id="GO:0009941">
    <property type="term" value="C:chloroplast envelope"/>
    <property type="evidence" value="ECO:0007005"/>
    <property type="project" value="TAIR"/>
</dbReference>
<dbReference type="GO" id="GO:0005739">
    <property type="term" value="C:mitochondrion"/>
    <property type="evidence" value="ECO:0007005"/>
    <property type="project" value="TAIR"/>
</dbReference>
<dbReference type="GO" id="GO:0003729">
    <property type="term" value="F:mRNA binding"/>
    <property type="evidence" value="ECO:0000314"/>
    <property type="project" value="TAIR"/>
</dbReference>
<dbReference type="FunFam" id="1.25.40.10:FF:000394">
    <property type="entry name" value="Pentatricopeptide repeat-containing protein, mitochondrial"/>
    <property type="match status" value="1"/>
</dbReference>
<dbReference type="FunFam" id="1.25.40.10:FF:000551">
    <property type="entry name" value="Pentatricopeptide repeat-containing protein, mitochondrial"/>
    <property type="match status" value="1"/>
</dbReference>
<dbReference type="FunFam" id="1.25.40.10:FF:000620">
    <property type="entry name" value="Pentatricopeptide repeat-containing protein, mitochondrial"/>
    <property type="match status" value="1"/>
</dbReference>
<dbReference type="Gene3D" id="1.25.40.10">
    <property type="entry name" value="Tetratricopeptide repeat domain"/>
    <property type="match status" value="3"/>
</dbReference>
<dbReference type="InterPro" id="IPR002885">
    <property type="entry name" value="Pentatricopeptide_rpt"/>
</dbReference>
<dbReference type="InterPro" id="IPR011990">
    <property type="entry name" value="TPR-like_helical_dom_sf"/>
</dbReference>
<dbReference type="NCBIfam" id="TIGR00756">
    <property type="entry name" value="PPR"/>
    <property type="match status" value="3"/>
</dbReference>
<dbReference type="PANTHER" id="PTHR45717:SF15">
    <property type="entry name" value="AGL218WP"/>
    <property type="match status" value="1"/>
</dbReference>
<dbReference type="PANTHER" id="PTHR45717">
    <property type="entry name" value="OS12G0527900 PROTEIN"/>
    <property type="match status" value="1"/>
</dbReference>
<dbReference type="Pfam" id="PF01535">
    <property type="entry name" value="PPR"/>
    <property type="match status" value="4"/>
</dbReference>
<dbReference type="Pfam" id="PF13812">
    <property type="entry name" value="PPR_3"/>
    <property type="match status" value="1"/>
</dbReference>
<dbReference type="PROSITE" id="PS51375">
    <property type="entry name" value="PPR"/>
    <property type="match status" value="8"/>
</dbReference>
<keyword id="KW-0496">Mitochondrion</keyword>
<keyword id="KW-1185">Reference proteome</keyword>
<keyword id="KW-0677">Repeat</keyword>
<keyword id="KW-0809">Transit peptide</keyword>
<proteinExistence type="evidence at transcript level"/>
<organism>
    <name type="scientific">Arabidopsis thaliana</name>
    <name type="common">Mouse-ear cress</name>
    <dbReference type="NCBI Taxonomy" id="3702"/>
    <lineage>
        <taxon>Eukaryota</taxon>
        <taxon>Viridiplantae</taxon>
        <taxon>Streptophyta</taxon>
        <taxon>Embryophyta</taxon>
        <taxon>Tracheophyta</taxon>
        <taxon>Spermatophyta</taxon>
        <taxon>Magnoliopsida</taxon>
        <taxon>eudicotyledons</taxon>
        <taxon>Gunneridae</taxon>
        <taxon>Pentapetalae</taxon>
        <taxon>rosids</taxon>
        <taxon>malvids</taxon>
        <taxon>Brassicales</taxon>
        <taxon>Brassicaceae</taxon>
        <taxon>Camelineae</taxon>
        <taxon>Arabidopsis</taxon>
    </lineage>
</organism>